<evidence type="ECO:0000255" key="1">
    <source>
        <dbReference type="HAMAP-Rule" id="MF_00445"/>
    </source>
</evidence>
<organism>
    <name type="scientific">Buchnera aphidicola subsp. Schizaphis graminum (strain Sg)</name>
    <dbReference type="NCBI Taxonomy" id="198804"/>
    <lineage>
        <taxon>Bacteria</taxon>
        <taxon>Pseudomonadati</taxon>
        <taxon>Pseudomonadota</taxon>
        <taxon>Gammaproteobacteria</taxon>
        <taxon>Enterobacterales</taxon>
        <taxon>Erwiniaceae</taxon>
        <taxon>Buchnera</taxon>
    </lineage>
</organism>
<feature type="chain" id="PRO_0000117691" description="NADH-quinone oxidoreductase subunit N">
    <location>
        <begin position="1"/>
        <end position="486"/>
    </location>
</feature>
<feature type="transmembrane region" description="Helical" evidence="1">
    <location>
        <begin position="8"/>
        <end position="28"/>
    </location>
</feature>
<feature type="transmembrane region" description="Helical" evidence="1">
    <location>
        <begin position="36"/>
        <end position="56"/>
    </location>
</feature>
<feature type="transmembrane region" description="Helical" evidence="1">
    <location>
        <begin position="74"/>
        <end position="94"/>
    </location>
</feature>
<feature type="transmembrane region" description="Helical" evidence="1">
    <location>
        <begin position="104"/>
        <end position="124"/>
    </location>
</feature>
<feature type="transmembrane region" description="Helical" evidence="1">
    <location>
        <begin position="125"/>
        <end position="145"/>
    </location>
</feature>
<feature type="transmembrane region" description="Helical" evidence="1">
    <location>
        <begin position="160"/>
        <end position="180"/>
    </location>
</feature>
<feature type="transmembrane region" description="Helical" evidence="1">
    <location>
        <begin position="204"/>
        <end position="224"/>
    </location>
</feature>
<feature type="transmembrane region" description="Helical" evidence="1">
    <location>
        <begin position="239"/>
        <end position="259"/>
    </location>
</feature>
<feature type="transmembrane region" description="Helical" evidence="1">
    <location>
        <begin position="270"/>
        <end position="290"/>
    </location>
</feature>
<feature type="transmembrane region" description="Helical" evidence="1">
    <location>
        <begin position="298"/>
        <end position="318"/>
    </location>
</feature>
<feature type="transmembrane region" description="Helical" evidence="1">
    <location>
        <begin position="329"/>
        <end position="349"/>
    </location>
</feature>
<feature type="transmembrane region" description="Helical" evidence="1">
    <location>
        <begin position="374"/>
        <end position="394"/>
    </location>
</feature>
<feature type="transmembrane region" description="Helical" evidence="1">
    <location>
        <begin position="407"/>
        <end position="427"/>
    </location>
</feature>
<feature type="transmembrane region" description="Helical" evidence="1">
    <location>
        <begin position="459"/>
        <end position="479"/>
    </location>
</feature>
<reference key="1">
    <citation type="journal article" date="2002" name="Science">
        <title>50 million years of genomic stasis in endosymbiotic bacteria.</title>
        <authorList>
            <person name="Tamas I."/>
            <person name="Klasson L."/>
            <person name="Canbaeck B."/>
            <person name="Naeslund A.K."/>
            <person name="Eriksson A.-S."/>
            <person name="Wernegreen J.J."/>
            <person name="Sandstroem J.P."/>
            <person name="Moran N.A."/>
            <person name="Andersson S.G.E."/>
        </authorList>
    </citation>
    <scope>NUCLEOTIDE SEQUENCE [LARGE SCALE GENOMIC DNA]</scope>
    <source>
        <strain>Sg</strain>
    </source>
</reference>
<name>NUON_BUCAP</name>
<sequence length="486" mass="54818">MIINLQELIALLPFLILLLTVVIVILSISYNRNHFFIAFLTIISLIVSLCSLYFLIAIVPIDITSLFHITKRSILYISMIIISSIATCVFAYPWLLKYAFNKEEFYLLTLISTLGAIFLTISNHMASLFISVELMSLPIFGLIAYSNSQKYSLEASFKYLVLSGVSSSFLLLGISWIYAISGNLSLLCLNQIFSDLSNSEKMMVLFGIIMVLMSFFFKLSMVPFHLWTADIYQGTPASVLSFFSVSGKIAIFSILLYFFSYFSVFDNKVIFLILSLISFFSILFGNLMAIFQTNIKRFFGYSSISQIGYLLIILLVSKDEYFFSVQTGGIFLLNYLCTNIVYFGVINLFSNSCDYDIDSIHLYKGLFWVQPLLASIVTIVLLSLGGIPITLGFFGKFCIFSIIIKNHLWTIGASFLIGTILGLYGYLRLIVNMYLNPSEQSFINDIKKSNFWLCSPSGILIFISGIMLLILGIYPNPLINLINSVQ</sequence>
<comment type="function">
    <text evidence="1">NDH-1 shuttles electrons from NADH, via FMN and iron-sulfur (Fe-S) centers, to quinones in the respiratory chain. The immediate electron acceptor for the enzyme in this species is believed to be ubiquinone. Couples the redox reaction to proton translocation (for every two electrons transferred, four hydrogen ions are translocated across the cytoplasmic membrane), and thus conserves the redox energy in a proton gradient.</text>
</comment>
<comment type="catalytic activity">
    <reaction evidence="1">
        <text>a quinone + NADH + 5 H(+)(in) = a quinol + NAD(+) + 4 H(+)(out)</text>
        <dbReference type="Rhea" id="RHEA:57888"/>
        <dbReference type="ChEBI" id="CHEBI:15378"/>
        <dbReference type="ChEBI" id="CHEBI:24646"/>
        <dbReference type="ChEBI" id="CHEBI:57540"/>
        <dbReference type="ChEBI" id="CHEBI:57945"/>
        <dbReference type="ChEBI" id="CHEBI:132124"/>
    </reaction>
</comment>
<comment type="subunit">
    <text evidence="1">NDH-1 is composed of 13 different subunits. Subunits NuoA, H, J, K, L, M, N constitute the membrane sector of the complex.</text>
</comment>
<comment type="subcellular location">
    <subcellularLocation>
        <location>Cell membrane</location>
        <topology>Multi-pass membrane protein</topology>
    </subcellularLocation>
</comment>
<comment type="similarity">
    <text evidence="1">Belongs to the complex I subunit 2 family.</text>
</comment>
<keyword id="KW-1003">Cell membrane</keyword>
<keyword id="KW-0472">Membrane</keyword>
<keyword id="KW-0520">NAD</keyword>
<keyword id="KW-0874">Quinone</keyword>
<keyword id="KW-1278">Translocase</keyword>
<keyword id="KW-0812">Transmembrane</keyword>
<keyword id="KW-1133">Transmembrane helix</keyword>
<keyword id="KW-0813">Transport</keyword>
<keyword id="KW-0830">Ubiquinone</keyword>
<accession>Q8K9X5</accession>
<proteinExistence type="inferred from homology"/>
<dbReference type="EC" id="7.1.1.-" evidence="1"/>
<dbReference type="EMBL" id="AE013218">
    <property type="protein sequence ID" value="AAM67727.1"/>
    <property type="molecule type" value="Genomic_DNA"/>
</dbReference>
<dbReference type="RefSeq" id="WP_011053694.1">
    <property type="nucleotide sequence ID" value="NC_004061.1"/>
</dbReference>
<dbReference type="SMR" id="Q8K9X5"/>
<dbReference type="STRING" id="198804.BUsg_159"/>
<dbReference type="GeneID" id="93003629"/>
<dbReference type="KEGG" id="bas:BUsg_159"/>
<dbReference type="eggNOG" id="COG1007">
    <property type="taxonomic scope" value="Bacteria"/>
</dbReference>
<dbReference type="HOGENOM" id="CLU_007100_1_5_6"/>
<dbReference type="Proteomes" id="UP000000416">
    <property type="component" value="Chromosome"/>
</dbReference>
<dbReference type="GO" id="GO:0005886">
    <property type="term" value="C:plasma membrane"/>
    <property type="evidence" value="ECO:0007669"/>
    <property type="project" value="UniProtKB-SubCell"/>
</dbReference>
<dbReference type="GO" id="GO:0008137">
    <property type="term" value="F:NADH dehydrogenase (ubiquinone) activity"/>
    <property type="evidence" value="ECO:0007669"/>
    <property type="project" value="InterPro"/>
</dbReference>
<dbReference type="GO" id="GO:0050136">
    <property type="term" value="F:NADH:ubiquinone reductase (non-electrogenic) activity"/>
    <property type="evidence" value="ECO:0007669"/>
    <property type="project" value="UniProtKB-UniRule"/>
</dbReference>
<dbReference type="GO" id="GO:0048038">
    <property type="term" value="F:quinone binding"/>
    <property type="evidence" value="ECO:0007669"/>
    <property type="project" value="UniProtKB-KW"/>
</dbReference>
<dbReference type="GO" id="GO:0042773">
    <property type="term" value="P:ATP synthesis coupled electron transport"/>
    <property type="evidence" value="ECO:0007669"/>
    <property type="project" value="InterPro"/>
</dbReference>
<dbReference type="HAMAP" id="MF_00445">
    <property type="entry name" value="NDH1_NuoN_1"/>
    <property type="match status" value="1"/>
</dbReference>
<dbReference type="InterPro" id="IPR010096">
    <property type="entry name" value="NADH-Q_OxRdtase_suN/2"/>
</dbReference>
<dbReference type="InterPro" id="IPR001750">
    <property type="entry name" value="ND/Mrp_TM"/>
</dbReference>
<dbReference type="NCBIfam" id="TIGR01770">
    <property type="entry name" value="NDH_I_N"/>
    <property type="match status" value="1"/>
</dbReference>
<dbReference type="PANTHER" id="PTHR22773">
    <property type="entry name" value="NADH DEHYDROGENASE"/>
    <property type="match status" value="1"/>
</dbReference>
<dbReference type="Pfam" id="PF00361">
    <property type="entry name" value="Proton_antipo_M"/>
    <property type="match status" value="1"/>
</dbReference>
<gene>
    <name evidence="1" type="primary">nuoN</name>
    <name type="ordered locus">BUsg_159</name>
</gene>
<protein>
    <recommendedName>
        <fullName evidence="1">NADH-quinone oxidoreductase subunit N</fullName>
        <ecNumber evidence="1">7.1.1.-</ecNumber>
    </recommendedName>
    <alternativeName>
        <fullName evidence="1">NADH dehydrogenase I subunit N</fullName>
    </alternativeName>
    <alternativeName>
        <fullName evidence="1">NDH-1 subunit N</fullName>
    </alternativeName>
</protein>